<keyword id="KW-0106">Calcium</keyword>
<keyword id="KW-0167">Capsid protein</keyword>
<keyword id="KW-1015">Disulfide bond</keyword>
<keyword id="KW-0325">Glycoprotein</keyword>
<keyword id="KW-1038">Host endoplasmic reticulum</keyword>
<keyword id="KW-0945">Host-virus interaction</keyword>
<keyword id="KW-0479">Metal-binding</keyword>
<keyword id="KW-1152">Outer capsid protein</keyword>
<keyword id="KW-0732">Signal</keyword>
<keyword id="KW-1146">T=13 icosahedral capsid protein</keyword>
<keyword id="KW-0946">Virion</keyword>
<organism>
    <name type="scientific">Rotavirus B (isolate RVB/Rat/United States/IDIR/1984/G1P[X])</name>
    <name type="common">RV-B</name>
    <name type="synonym">Rotavirus B (isolate infectious diarrhea of infant rats)</name>
    <dbReference type="NCBI Taxonomy" id="28877"/>
    <lineage>
        <taxon>Viruses</taxon>
        <taxon>Riboviria</taxon>
        <taxon>Orthornavirae</taxon>
        <taxon>Duplornaviricota</taxon>
        <taxon>Resentoviricetes</taxon>
        <taxon>Reovirales</taxon>
        <taxon>Sedoreoviridae</taxon>
        <taxon>Rotavirus</taxon>
        <taxon>Rotavirus B</taxon>
    </lineage>
</organism>
<reference key="1">
    <citation type="journal article" date="1991" name="J. Gen. Virol.">
        <title>Comparison of group B rotavirus genes 9 and 11.</title>
        <authorList>
            <person name="Petric M."/>
            <person name="Mayur K."/>
            <person name="Vonderfecht S."/>
            <person name="Eiden J.J."/>
        </authorList>
    </citation>
    <scope>NUCLEOTIDE SEQUENCE [GENOMIC RNA]</scope>
</reference>
<evidence type="ECO:0000255" key="1">
    <source>
        <dbReference type="HAMAP-Rule" id="MF_04130"/>
    </source>
</evidence>
<accession>P30889</accession>
<feature type="signal peptide" evidence="1">
    <location>
        <begin position="1"/>
        <end position="16"/>
    </location>
</feature>
<feature type="chain" id="PRO_0000041132" description="Outer capsid glycoprotein VP7" evidence="1">
    <location>
        <begin position="17"/>
        <end position="246"/>
    </location>
</feature>
<organismHost>
    <name type="scientific">Homo sapiens</name>
    <name type="common">Human</name>
    <dbReference type="NCBI Taxonomy" id="9606"/>
</organismHost>
<organismHost>
    <name type="scientific">Rattus norvegicus</name>
    <name type="common">Rat</name>
    <dbReference type="NCBI Taxonomy" id="10116"/>
</organismHost>
<sequence length="246" mass="28319">MTTMLLLLVVAALANGQLTILPHEESQICFLQPDNPGFDFDGNFTNIFRDYASVKISSFTYKAQDADIVEILNVDRDRSCTILAIYIADSTLDFNTFLQSENECVKYAASKKHYIKLPRDREYFALAKNLSFCPLNDDLIGIYCDTQLETTYFSVARSSNYDVTDIPEFTELGYVFHSNDHFYICERKSEGNWIDYQLFYQNDAPLGTVSQRVNWGNVWSNVKTVAQMVYKILDIFFGKRNIEPRA</sequence>
<proteinExistence type="inferred from homology"/>
<name>VP7_ROTGI</name>
<protein>
    <recommendedName>
        <fullName evidence="1">Outer capsid glycoprotein VP7</fullName>
    </recommendedName>
</protein>
<comment type="function">
    <text evidence="1">Calcium-binding protein that interacts with rotavirus cell receptors once the initial attachment by VP4 has been achieved. Rotavirus attachment and entry into the host cell probably involves multiple sequential contacts between the outer capsid proteins VP4 and VP7, and the cell receptors. Following entry into the host cell, low intracellular or intravesicular Ca(2+) concentration probably causes the calcium-stabilized VP7 trimers to dissociate from the virion. This step is probably necessary for the membrane-disrupting entry step and the release of VP4, which is locked onto the virion by VP7.</text>
</comment>
<comment type="subunit">
    <text evidence="1">Homotrimer; disulfide-linked. 2 Ca(2+) ions bound at each subunit interface in the trimer hold the trimer together. Interacts with the intermediate capsid protein VP6. Interacts with the outer capsid protein VP5*.</text>
</comment>
<comment type="subcellular location">
    <subcellularLocation>
        <location evidence="1">Virion</location>
    </subcellularLocation>
    <subcellularLocation>
        <location evidence="1">Host endoplasmic reticulum lumen</location>
    </subcellularLocation>
    <text evidence="1">The outer layer contains 780 copies of VP7, grouped as 260 trimers. Immature double-layered particles assembled in the cytoplasm bud across the membrane of the endoplasmic reticulum, acquiring during this process a transient lipid membrane that is modified with the ER resident viral glycoproteins NSP4 and VP7; these enveloped particles also contain VP4. As the particles move towards the interior of the ER cisternae, the transient lipid membrane and the non-structural protein NSP4 are lost, while the virus surface proteins VP4 and VP7 rearrange to form the outermost virus protein layer, yielding mature infectious triple-layered particles.</text>
</comment>
<comment type="similarity">
    <text evidence="1">Belongs to the rotavirus VP7 family.</text>
</comment>
<dbReference type="EMBL" id="D00911">
    <property type="protein sequence ID" value="BAA00757.1"/>
    <property type="molecule type" value="Genomic_RNA"/>
</dbReference>
<dbReference type="PIR" id="JQ1311">
    <property type="entry name" value="JQ1311"/>
</dbReference>
<dbReference type="SMR" id="P30889"/>
<dbReference type="GO" id="GO:0044166">
    <property type="term" value="C:host cell endoplasmic reticulum lumen"/>
    <property type="evidence" value="ECO:0007669"/>
    <property type="project" value="UniProtKB-SubCell"/>
</dbReference>
<dbReference type="GO" id="GO:0016020">
    <property type="term" value="C:membrane"/>
    <property type="evidence" value="ECO:0007669"/>
    <property type="project" value="InterPro"/>
</dbReference>
<dbReference type="GO" id="GO:0039621">
    <property type="term" value="C:T=13 icosahedral viral capsid"/>
    <property type="evidence" value="ECO:0007669"/>
    <property type="project" value="UniProtKB-UniRule"/>
</dbReference>
<dbReference type="GO" id="GO:0039624">
    <property type="term" value="C:viral outer capsid"/>
    <property type="evidence" value="ECO:0007669"/>
    <property type="project" value="UniProtKB-UniRule"/>
</dbReference>
<dbReference type="GO" id="GO:0046872">
    <property type="term" value="F:metal ion binding"/>
    <property type="evidence" value="ECO:0007669"/>
    <property type="project" value="UniProtKB-KW"/>
</dbReference>
<dbReference type="HAMAP" id="MF_04130">
    <property type="entry name" value="Rota_VP7"/>
    <property type="match status" value="1"/>
</dbReference>
<dbReference type="InterPro" id="IPR008818">
    <property type="entry name" value="Rotavirus_VP7"/>
</dbReference>
<dbReference type="InterPro" id="IPR001963">
    <property type="entry name" value="VP7"/>
</dbReference>
<dbReference type="Pfam" id="PF05868">
    <property type="entry name" value="Rotavirus_VP7"/>
    <property type="match status" value="1"/>
</dbReference>